<proteinExistence type="inferred from homology"/>
<keyword id="KW-0997">Cell inner membrane</keyword>
<keyword id="KW-1003">Cell membrane</keyword>
<keyword id="KW-0472">Membrane</keyword>
<keyword id="KW-1185">Reference proteome</keyword>
<keyword id="KW-0812">Transmembrane</keyword>
<keyword id="KW-1133">Transmembrane helix</keyword>
<protein>
    <recommendedName>
        <fullName evidence="1">UPF0208 membrane protein PM0703</fullName>
    </recommendedName>
</protein>
<comment type="subcellular location">
    <subcellularLocation>
        <location evidence="1">Cell inner membrane</location>
        <topology evidence="1">Multi-pass membrane protein</topology>
    </subcellularLocation>
</comment>
<comment type="similarity">
    <text evidence="1">Belongs to the UPF0208 family.</text>
</comment>
<gene>
    <name type="ordered locus">PM0703</name>
</gene>
<accession>Q9CMV2</accession>
<dbReference type="EMBL" id="AE004439">
    <property type="protein sequence ID" value="AAK02787.1"/>
    <property type="molecule type" value="Genomic_DNA"/>
</dbReference>
<dbReference type="SMR" id="Q9CMV2"/>
<dbReference type="STRING" id="272843.PM0703"/>
<dbReference type="EnsemblBacteria" id="AAK02787">
    <property type="protein sequence ID" value="AAK02787"/>
    <property type="gene ID" value="PM0703"/>
</dbReference>
<dbReference type="KEGG" id="pmu:PM0703"/>
<dbReference type="HOGENOM" id="CLU_128746_0_0_6"/>
<dbReference type="OrthoDB" id="7066670at2"/>
<dbReference type="Proteomes" id="UP000000809">
    <property type="component" value="Chromosome"/>
</dbReference>
<dbReference type="GO" id="GO:0005886">
    <property type="term" value="C:plasma membrane"/>
    <property type="evidence" value="ECO:0007669"/>
    <property type="project" value="UniProtKB-SubCell"/>
</dbReference>
<dbReference type="HAMAP" id="MF_01101">
    <property type="entry name" value="UPF0208"/>
    <property type="match status" value="1"/>
</dbReference>
<dbReference type="InterPro" id="IPR007334">
    <property type="entry name" value="UPF0208"/>
</dbReference>
<dbReference type="NCBIfam" id="NF002493">
    <property type="entry name" value="PRK01816.1"/>
    <property type="match status" value="1"/>
</dbReference>
<dbReference type="Pfam" id="PF04217">
    <property type="entry name" value="DUF412"/>
    <property type="match status" value="1"/>
</dbReference>
<evidence type="ECO:0000255" key="1">
    <source>
        <dbReference type="HAMAP-Rule" id="MF_01101"/>
    </source>
</evidence>
<reference key="1">
    <citation type="journal article" date="2001" name="Proc. Natl. Acad. Sci. U.S.A.">
        <title>Complete genomic sequence of Pasteurella multocida Pm70.</title>
        <authorList>
            <person name="May B.J."/>
            <person name="Zhang Q."/>
            <person name="Li L.L."/>
            <person name="Paustian M.L."/>
            <person name="Whittam T.S."/>
            <person name="Kapur V."/>
        </authorList>
    </citation>
    <scope>NUCLEOTIDE SEQUENCE [LARGE SCALE GENOMIC DNA]</scope>
    <source>
        <strain>Pm70</strain>
    </source>
</reference>
<name>Y703_PASMU</name>
<feature type="chain" id="PRO_0000080815" description="UPF0208 membrane protein PM0703">
    <location>
        <begin position="1"/>
        <end position="147"/>
    </location>
</feature>
<feature type="transmembrane region" description="Helical" evidence="1">
    <location>
        <begin position="32"/>
        <end position="52"/>
    </location>
</feature>
<feature type="transmembrane region" description="Helical" evidence="1">
    <location>
        <begin position="65"/>
        <end position="85"/>
    </location>
</feature>
<organism>
    <name type="scientific">Pasteurella multocida (strain Pm70)</name>
    <dbReference type="NCBI Taxonomy" id="272843"/>
    <lineage>
        <taxon>Bacteria</taxon>
        <taxon>Pseudomonadati</taxon>
        <taxon>Pseudomonadota</taxon>
        <taxon>Gammaproteobacteria</taxon>
        <taxon>Pasteurellales</taxon>
        <taxon>Pasteurellaceae</taxon>
        <taxon>Pasteurella</taxon>
    </lineage>
</organism>
<sequence>MYFFIFLKKGQHYLKSWPLESKLGMIFPENRVIKATLFAQKFMPFLAVFAITWQQVYAKSDISALAIAVFSAIVALLIPLQGLYWLGKRSITPLSPQSAVWFYEICERLKQVNETLPILTEQPNYQNLADVLKKAQRKLDKAFWQEL</sequence>